<comment type="function">
    <text evidence="1">NQR complex catalyzes the reduction of ubiquinone-1 to ubiquinol by two successive reactions, coupled with the transport of Na(+) ions from the cytoplasm to the periplasm. NqrA to NqrE are probably involved in the second step, the conversion of ubisemiquinone to ubiquinol.</text>
</comment>
<comment type="catalytic activity">
    <reaction evidence="1">
        <text>a ubiquinone + n Na(+)(in) + NADH + H(+) = a ubiquinol + n Na(+)(out) + NAD(+)</text>
        <dbReference type="Rhea" id="RHEA:47748"/>
        <dbReference type="Rhea" id="RHEA-COMP:9565"/>
        <dbReference type="Rhea" id="RHEA-COMP:9566"/>
        <dbReference type="ChEBI" id="CHEBI:15378"/>
        <dbReference type="ChEBI" id="CHEBI:16389"/>
        <dbReference type="ChEBI" id="CHEBI:17976"/>
        <dbReference type="ChEBI" id="CHEBI:29101"/>
        <dbReference type="ChEBI" id="CHEBI:57540"/>
        <dbReference type="ChEBI" id="CHEBI:57945"/>
        <dbReference type="EC" id="7.2.1.1"/>
    </reaction>
</comment>
<comment type="cofactor">
    <cofactor evidence="1">
        <name>FMN</name>
        <dbReference type="ChEBI" id="CHEBI:58210"/>
    </cofactor>
</comment>
<comment type="subunit">
    <text evidence="1">Composed of six subunits; NqrA, NqrB, NqrC, NqrD, NqrE and NqrF.</text>
</comment>
<comment type="subcellular location">
    <subcellularLocation>
        <location evidence="1">Cell inner membrane</location>
        <topology evidence="1">Multi-pass membrane protein</topology>
    </subcellularLocation>
</comment>
<comment type="similarity">
    <text evidence="1">Belongs to the NqrB/RnfD family.</text>
</comment>
<evidence type="ECO:0000255" key="1">
    <source>
        <dbReference type="HAMAP-Rule" id="MF_00426"/>
    </source>
</evidence>
<dbReference type="EC" id="7.2.1.1" evidence="1"/>
<dbReference type="EMBL" id="AE001273">
    <property type="protein sequence ID" value="AAC67871.1"/>
    <property type="molecule type" value="Genomic_DNA"/>
</dbReference>
<dbReference type="PIR" id="C71535">
    <property type="entry name" value="C71535"/>
</dbReference>
<dbReference type="RefSeq" id="NP_219783.1">
    <property type="nucleotide sequence ID" value="NC_000117.1"/>
</dbReference>
<dbReference type="RefSeq" id="WP_009871625.1">
    <property type="nucleotide sequence ID" value="NC_000117.1"/>
</dbReference>
<dbReference type="SMR" id="O84280"/>
<dbReference type="STRING" id="272561.CT_278"/>
<dbReference type="EnsemblBacteria" id="AAC67871">
    <property type="protein sequence ID" value="AAC67871"/>
    <property type="gene ID" value="CT_278"/>
</dbReference>
<dbReference type="GeneID" id="884842"/>
<dbReference type="KEGG" id="ctr:CT_278"/>
<dbReference type="PATRIC" id="fig|272561.5.peg.297"/>
<dbReference type="HOGENOM" id="CLU_042020_1_1_0"/>
<dbReference type="InParanoid" id="O84280"/>
<dbReference type="OrthoDB" id="9776359at2"/>
<dbReference type="Proteomes" id="UP000000431">
    <property type="component" value="Chromosome"/>
</dbReference>
<dbReference type="GO" id="GO:0005886">
    <property type="term" value="C:plasma membrane"/>
    <property type="evidence" value="ECO:0000318"/>
    <property type="project" value="GO_Central"/>
</dbReference>
<dbReference type="GO" id="GO:0010181">
    <property type="term" value="F:FMN binding"/>
    <property type="evidence" value="ECO:0007669"/>
    <property type="project" value="InterPro"/>
</dbReference>
<dbReference type="GO" id="GO:0016655">
    <property type="term" value="F:oxidoreductase activity, acting on NAD(P)H, quinone or similar compound as acceptor"/>
    <property type="evidence" value="ECO:0007669"/>
    <property type="project" value="UniProtKB-UniRule"/>
</dbReference>
<dbReference type="GO" id="GO:0022904">
    <property type="term" value="P:respiratory electron transport chain"/>
    <property type="evidence" value="ECO:0007669"/>
    <property type="project" value="InterPro"/>
</dbReference>
<dbReference type="GO" id="GO:0006814">
    <property type="term" value="P:sodium ion transport"/>
    <property type="evidence" value="ECO:0007669"/>
    <property type="project" value="UniProtKB-UniRule"/>
</dbReference>
<dbReference type="GO" id="GO:0055085">
    <property type="term" value="P:transmembrane transport"/>
    <property type="evidence" value="ECO:0007669"/>
    <property type="project" value="InterPro"/>
</dbReference>
<dbReference type="HAMAP" id="MF_00426">
    <property type="entry name" value="NqrB"/>
    <property type="match status" value="1"/>
</dbReference>
<dbReference type="InterPro" id="IPR010966">
    <property type="entry name" value="NqrB"/>
</dbReference>
<dbReference type="InterPro" id="IPR004338">
    <property type="entry name" value="NqrB/RnfD"/>
</dbReference>
<dbReference type="NCBIfam" id="TIGR01937">
    <property type="entry name" value="nqrB"/>
    <property type="match status" value="1"/>
</dbReference>
<dbReference type="NCBIfam" id="NF002181">
    <property type="entry name" value="PRK01024.1"/>
    <property type="match status" value="1"/>
</dbReference>
<dbReference type="PANTHER" id="PTHR30578">
    <property type="entry name" value="ELECTRON TRANSPORT COMPLEX PROTEIN RNFD"/>
    <property type="match status" value="1"/>
</dbReference>
<dbReference type="PANTHER" id="PTHR30578:SF1">
    <property type="entry name" value="NA(+)-TRANSLOCATING NADH-QUINONE REDUCTASE SUBUNIT B"/>
    <property type="match status" value="1"/>
</dbReference>
<dbReference type="Pfam" id="PF03116">
    <property type="entry name" value="NQR2_RnfD_RnfE"/>
    <property type="match status" value="1"/>
</dbReference>
<proteinExistence type="inferred from homology"/>
<keyword id="KW-0997">Cell inner membrane</keyword>
<keyword id="KW-1003">Cell membrane</keyword>
<keyword id="KW-0285">Flavoprotein</keyword>
<keyword id="KW-0288">FMN</keyword>
<keyword id="KW-0406">Ion transport</keyword>
<keyword id="KW-0472">Membrane</keyword>
<keyword id="KW-0520">NAD</keyword>
<keyword id="KW-0597">Phosphoprotein</keyword>
<keyword id="KW-1185">Reference proteome</keyword>
<keyword id="KW-0915">Sodium</keyword>
<keyword id="KW-0739">Sodium transport</keyword>
<keyword id="KW-1278">Translocase</keyword>
<keyword id="KW-0812">Transmembrane</keyword>
<keyword id="KW-1133">Transmembrane helix</keyword>
<keyword id="KW-0813">Transport</keyword>
<keyword id="KW-0830">Ubiquinone</keyword>
<gene>
    <name evidence="1" type="primary">nqrB</name>
    <name type="synonym">nqr2</name>
    <name type="ordered locus">CT_278</name>
</gene>
<name>NQRB_CHLTR</name>
<reference key="1">
    <citation type="journal article" date="1998" name="Science">
        <title>Genome sequence of an obligate intracellular pathogen of humans: Chlamydia trachomatis.</title>
        <authorList>
            <person name="Stephens R.S."/>
            <person name="Kalman S."/>
            <person name="Lammel C.J."/>
            <person name="Fan J."/>
            <person name="Marathe R."/>
            <person name="Aravind L."/>
            <person name="Mitchell W.P."/>
            <person name="Olinger L."/>
            <person name="Tatusov R.L."/>
            <person name="Zhao Q."/>
            <person name="Koonin E.V."/>
            <person name="Davis R.W."/>
        </authorList>
    </citation>
    <scope>NUCLEOTIDE SEQUENCE [LARGE SCALE GENOMIC DNA]</scope>
    <source>
        <strain>ATCC VR-885 / DSM 19411 / UW-3/Cx</strain>
    </source>
</reference>
<accession>O84280</accession>
<protein>
    <recommendedName>
        <fullName evidence="1">Na(+)-translocating NADH-quinone reductase subunit B</fullName>
        <shortName evidence="1">Na(+)-NQR subunit B</shortName>
        <shortName evidence="1">Na(+)-translocating NQR subunit B</shortName>
        <ecNumber evidence="1">7.2.1.1</ecNumber>
    </recommendedName>
    <alternativeName>
        <fullName evidence="1">NQR complex subunit B</fullName>
    </alternativeName>
    <alternativeName>
        <fullName evidence="1">NQR-1 subunit B</fullName>
    </alternativeName>
</protein>
<organism>
    <name type="scientific">Chlamydia trachomatis serovar D (strain ATCC VR-885 / DSM 19411 / UW-3/Cx)</name>
    <dbReference type="NCBI Taxonomy" id="272561"/>
    <lineage>
        <taxon>Bacteria</taxon>
        <taxon>Pseudomonadati</taxon>
        <taxon>Chlamydiota</taxon>
        <taxon>Chlamydiia</taxon>
        <taxon>Chlamydiales</taxon>
        <taxon>Chlamydiaceae</taxon>
        <taxon>Chlamydia/Chlamydophila group</taxon>
        <taxon>Chlamydia</taxon>
    </lineage>
</organism>
<feature type="chain" id="PRO_0000074435" description="Na(+)-translocating NADH-quinone reductase subunit B">
    <location>
        <begin position="1"/>
        <end position="503"/>
    </location>
</feature>
<feature type="transmembrane region" description="Helical" evidence="1">
    <location>
        <begin position="55"/>
        <end position="75"/>
    </location>
</feature>
<feature type="transmembrane region" description="Helical" evidence="1">
    <location>
        <begin position="120"/>
        <end position="142"/>
    </location>
</feature>
<feature type="transmembrane region" description="Helical" evidence="1">
    <location>
        <begin position="160"/>
        <end position="180"/>
    </location>
</feature>
<feature type="transmembrane region" description="Helical" evidence="1">
    <location>
        <begin position="361"/>
        <end position="381"/>
    </location>
</feature>
<feature type="transmembrane region" description="Helical" evidence="1">
    <location>
        <begin position="384"/>
        <end position="404"/>
    </location>
</feature>
<feature type="transmembrane region" description="Helical" evidence="1">
    <location>
        <begin position="417"/>
        <end position="437"/>
    </location>
</feature>
<feature type="transmembrane region" description="Helical" evidence="1">
    <location>
        <begin position="452"/>
        <end position="472"/>
    </location>
</feature>
<feature type="transmembrane region" description="Helical" evidence="1">
    <location>
        <begin position="475"/>
        <end position="495"/>
    </location>
</feature>
<feature type="modified residue" description="FMN phosphoryl threonine" evidence="1">
    <location>
        <position position="248"/>
    </location>
</feature>
<sequence>MLEKLVDSLWKICRKSKFQHMTPIADAVDTFCFEPLHTPSSPPFVRDAVDVKRWMMLVVIALMPTIFAAVWNSGLQALVYQSSDPRIMEAFLHISGFKSYFSFVSQEIGIGSVLFAGCKIFLPLLFISYAVGGTCEVLFAIIRKHKIAEGLLVTGMLYPLILPPTIPYWMAALGIAFGVVMGKELFGGTGMNILNPALTGRAFLFFTFPAKMSGDVWVGSNPSRIKESLATMSSLAEKSHFDGFSQSTCLQVLNSTPPSVKRVHIDAIASNILNLEHVPTQDVLQTQFATWAESYPGLTVDQLSLEQLQNFVTTPITEGGLGLLPAHFDSACSLTEAVYGIGKFSTGNLFFGNILGSLGETSTVACLLGAGLLLLTGIASWRTMLSFGLSAFFFAWFFKIMSILTTGNAGAWAPAKFFIPAYRHLCIGGLAFGLVFMATDPVSSPAMKLAKWLYGAFIGFLTILIRLINPAYPEGVMLAILLGNVFAPLFDNIALKQYRQRRI</sequence>